<sequence length="170" mass="18429">MKQEKTLLLQEVEDKISAAQGFILLRYLRFTAAYSREFRNSLSGVSAEFEVLKKRIFFKAIEAAGLEVDCSDTDGHLGVVFSCGDPVSAAKQVLDFNKQHKDSLVFLAGRMDNASLSGAEVEAVAKLPSLKELRQQVVGLFAAPMSQVVGIMNSVLSGVISCVDQKAGKN</sequence>
<name>RL10_CHLPN</name>
<dbReference type="EMBL" id="AE001363">
    <property type="protein sequence ID" value="AAD18232.1"/>
    <property type="molecule type" value="Genomic_DNA"/>
</dbReference>
<dbReference type="EMBL" id="AE002161">
    <property type="protein sequence ID" value="AAF38504.1"/>
    <property type="molecule type" value="Genomic_DNA"/>
</dbReference>
<dbReference type="EMBL" id="BA000008">
    <property type="protein sequence ID" value="BAA98289.1"/>
    <property type="molecule type" value="Genomic_DNA"/>
</dbReference>
<dbReference type="EMBL" id="AE009440">
    <property type="protein sequence ID" value="AAP98012.1"/>
    <property type="molecule type" value="Genomic_DNA"/>
</dbReference>
<dbReference type="PIR" id="B72122">
    <property type="entry name" value="B72122"/>
</dbReference>
<dbReference type="PIR" id="G86500">
    <property type="entry name" value="G86500"/>
</dbReference>
<dbReference type="RefSeq" id="NP_224287.1">
    <property type="nucleotide sequence ID" value="NC_000922.1"/>
</dbReference>
<dbReference type="RefSeq" id="WP_010882729.1">
    <property type="nucleotide sequence ID" value="NZ_LN847257.1"/>
</dbReference>
<dbReference type="SMR" id="Q9Z9A2"/>
<dbReference type="STRING" id="406984.CPK_ORF00587"/>
<dbReference type="GeneID" id="45050124"/>
<dbReference type="KEGG" id="cpa:CP_0696"/>
<dbReference type="KEGG" id="cpj:rl10"/>
<dbReference type="KEGG" id="cpn:CPn_0079"/>
<dbReference type="KEGG" id="cpt:CpB0079"/>
<dbReference type="PATRIC" id="fig|115713.3.peg.90"/>
<dbReference type="eggNOG" id="COG0244">
    <property type="taxonomic scope" value="Bacteria"/>
</dbReference>
<dbReference type="HOGENOM" id="CLU_092227_1_2_0"/>
<dbReference type="OrthoDB" id="18754at2"/>
<dbReference type="Proteomes" id="UP000000583">
    <property type="component" value="Chromosome"/>
</dbReference>
<dbReference type="Proteomes" id="UP000000801">
    <property type="component" value="Chromosome"/>
</dbReference>
<dbReference type="GO" id="GO:1990904">
    <property type="term" value="C:ribonucleoprotein complex"/>
    <property type="evidence" value="ECO:0007669"/>
    <property type="project" value="UniProtKB-KW"/>
</dbReference>
<dbReference type="GO" id="GO:0005840">
    <property type="term" value="C:ribosome"/>
    <property type="evidence" value="ECO:0007669"/>
    <property type="project" value="UniProtKB-KW"/>
</dbReference>
<dbReference type="GO" id="GO:0070180">
    <property type="term" value="F:large ribosomal subunit rRNA binding"/>
    <property type="evidence" value="ECO:0007669"/>
    <property type="project" value="UniProtKB-UniRule"/>
</dbReference>
<dbReference type="GO" id="GO:0006412">
    <property type="term" value="P:translation"/>
    <property type="evidence" value="ECO:0007669"/>
    <property type="project" value="UniProtKB-UniRule"/>
</dbReference>
<dbReference type="CDD" id="cd05797">
    <property type="entry name" value="Ribosomal_L10"/>
    <property type="match status" value="1"/>
</dbReference>
<dbReference type="Gene3D" id="3.30.70.1730">
    <property type="match status" value="1"/>
</dbReference>
<dbReference type="Gene3D" id="6.10.250.290">
    <property type="match status" value="1"/>
</dbReference>
<dbReference type="HAMAP" id="MF_00362">
    <property type="entry name" value="Ribosomal_uL10"/>
    <property type="match status" value="1"/>
</dbReference>
<dbReference type="InterPro" id="IPR001790">
    <property type="entry name" value="Ribosomal_uL10"/>
</dbReference>
<dbReference type="InterPro" id="IPR043141">
    <property type="entry name" value="Ribosomal_uL10-like_sf"/>
</dbReference>
<dbReference type="InterPro" id="IPR022973">
    <property type="entry name" value="Ribosomal_uL10_bac"/>
</dbReference>
<dbReference type="InterPro" id="IPR047865">
    <property type="entry name" value="Ribosomal_uL10_bac_type"/>
</dbReference>
<dbReference type="NCBIfam" id="NF000955">
    <property type="entry name" value="PRK00099.1-1"/>
    <property type="match status" value="1"/>
</dbReference>
<dbReference type="PANTHER" id="PTHR11560">
    <property type="entry name" value="39S RIBOSOMAL PROTEIN L10, MITOCHONDRIAL"/>
    <property type="match status" value="1"/>
</dbReference>
<dbReference type="Pfam" id="PF00466">
    <property type="entry name" value="Ribosomal_L10"/>
    <property type="match status" value="1"/>
</dbReference>
<dbReference type="SUPFAM" id="SSF160369">
    <property type="entry name" value="Ribosomal protein L10-like"/>
    <property type="match status" value="1"/>
</dbReference>
<gene>
    <name type="primary">rplJ</name>
    <name type="synonym">rl10</name>
    <name type="ordered locus">CPn_0079</name>
    <name type="ordered locus">CP_0696</name>
    <name type="ordered locus">CpB0079</name>
</gene>
<organism>
    <name type="scientific">Chlamydia pneumoniae</name>
    <name type="common">Chlamydophila pneumoniae</name>
    <dbReference type="NCBI Taxonomy" id="83558"/>
    <lineage>
        <taxon>Bacteria</taxon>
        <taxon>Pseudomonadati</taxon>
        <taxon>Chlamydiota</taxon>
        <taxon>Chlamydiia</taxon>
        <taxon>Chlamydiales</taxon>
        <taxon>Chlamydiaceae</taxon>
        <taxon>Chlamydia/Chlamydophila group</taxon>
        <taxon>Chlamydia</taxon>
    </lineage>
</organism>
<proteinExistence type="inferred from homology"/>
<evidence type="ECO:0000250" key="1"/>
<evidence type="ECO:0000305" key="2"/>
<comment type="function">
    <text evidence="1">Forms part of the ribosomal stalk, playing a central role in the interaction of the ribosome with GTP-bound translation factors.</text>
</comment>
<comment type="subunit">
    <text evidence="1">Part of the ribosomal stalk of the 50S ribosomal subunit. The N-terminus interacts with L11 and the large rRNA to form the base of the stalk. The C-terminus forms an elongated spine to which L12 dimers bind in a sequential fashion forming a multimeric L10(L12)X complex (By similarity).</text>
</comment>
<comment type="similarity">
    <text evidence="2">Belongs to the universal ribosomal protein uL10 family.</text>
</comment>
<keyword id="KW-0687">Ribonucleoprotein</keyword>
<keyword id="KW-0689">Ribosomal protein</keyword>
<keyword id="KW-0694">RNA-binding</keyword>
<keyword id="KW-0699">rRNA-binding</keyword>
<accession>Q9Z9A2</accession>
<accession>Q9JQB8</accession>
<protein>
    <recommendedName>
        <fullName evidence="2">Large ribosomal subunit protein uL10</fullName>
    </recommendedName>
    <alternativeName>
        <fullName>50S ribosomal protein L10</fullName>
    </alternativeName>
</protein>
<feature type="chain" id="PRO_0000154612" description="Large ribosomal subunit protein uL10">
    <location>
        <begin position="1"/>
        <end position="170"/>
    </location>
</feature>
<reference key="1">
    <citation type="journal article" date="1999" name="Nat. Genet.">
        <title>Comparative genomes of Chlamydia pneumoniae and C. trachomatis.</title>
        <authorList>
            <person name="Kalman S."/>
            <person name="Mitchell W.P."/>
            <person name="Marathe R."/>
            <person name="Lammel C.J."/>
            <person name="Fan J."/>
            <person name="Hyman R.W."/>
            <person name="Olinger L."/>
            <person name="Grimwood J."/>
            <person name="Davis R.W."/>
            <person name="Stephens R.S."/>
        </authorList>
    </citation>
    <scope>NUCLEOTIDE SEQUENCE [LARGE SCALE GENOMIC DNA]</scope>
    <source>
        <strain>CWL029</strain>
    </source>
</reference>
<reference key="2">
    <citation type="journal article" date="2000" name="Nucleic Acids Res.">
        <title>Genome sequences of Chlamydia trachomatis MoPn and Chlamydia pneumoniae AR39.</title>
        <authorList>
            <person name="Read T.D."/>
            <person name="Brunham R.C."/>
            <person name="Shen C."/>
            <person name="Gill S.R."/>
            <person name="Heidelberg J.F."/>
            <person name="White O."/>
            <person name="Hickey E.K."/>
            <person name="Peterson J.D."/>
            <person name="Utterback T.R."/>
            <person name="Berry K.J."/>
            <person name="Bass S."/>
            <person name="Linher K.D."/>
            <person name="Weidman J.F."/>
            <person name="Khouri H.M."/>
            <person name="Craven B."/>
            <person name="Bowman C."/>
            <person name="Dodson R.J."/>
            <person name="Gwinn M.L."/>
            <person name="Nelson W.C."/>
            <person name="DeBoy R.T."/>
            <person name="Kolonay J.F."/>
            <person name="McClarty G."/>
            <person name="Salzberg S.L."/>
            <person name="Eisen J.A."/>
            <person name="Fraser C.M."/>
        </authorList>
    </citation>
    <scope>NUCLEOTIDE SEQUENCE [LARGE SCALE GENOMIC DNA]</scope>
    <source>
        <strain>AR39</strain>
    </source>
</reference>
<reference key="3">
    <citation type="journal article" date="2000" name="Nucleic Acids Res.">
        <title>Comparison of whole genome sequences of Chlamydia pneumoniae J138 from Japan and CWL029 from USA.</title>
        <authorList>
            <person name="Shirai M."/>
            <person name="Hirakawa H."/>
            <person name="Kimoto M."/>
            <person name="Tabuchi M."/>
            <person name="Kishi F."/>
            <person name="Ouchi K."/>
            <person name="Shiba T."/>
            <person name="Ishii K."/>
            <person name="Hattori M."/>
            <person name="Kuhara S."/>
            <person name="Nakazawa T."/>
        </authorList>
    </citation>
    <scope>NUCLEOTIDE SEQUENCE [LARGE SCALE GENOMIC DNA]</scope>
    <source>
        <strain>J138</strain>
    </source>
</reference>
<reference key="4">
    <citation type="submission" date="2002-05" db="EMBL/GenBank/DDBJ databases">
        <title>The genome sequence of Chlamydia pneumoniae TW183 and comparison with other Chlamydia strains based on whole genome sequence analysis.</title>
        <authorList>
            <person name="Geng M.M."/>
            <person name="Schuhmacher A."/>
            <person name="Muehldorfer I."/>
            <person name="Bensch K.W."/>
            <person name="Schaefer K.P."/>
            <person name="Schneider S."/>
            <person name="Pohl T."/>
            <person name="Essig A."/>
            <person name="Marre R."/>
            <person name="Melchers K."/>
        </authorList>
    </citation>
    <scope>NUCLEOTIDE SEQUENCE [LARGE SCALE GENOMIC DNA]</scope>
    <source>
        <strain>TW-183</strain>
    </source>
</reference>